<evidence type="ECO:0000255" key="1">
    <source>
        <dbReference type="HAMAP-Rule" id="MF_01380"/>
    </source>
</evidence>
<proteinExistence type="inferred from homology"/>
<gene>
    <name evidence="1" type="primary">erpA</name>
    <name type="ordered locus">Psyr_4568</name>
</gene>
<dbReference type="EMBL" id="CP000075">
    <property type="protein sequence ID" value="AAY39598.1"/>
    <property type="molecule type" value="Genomic_DNA"/>
</dbReference>
<dbReference type="RefSeq" id="WP_002551953.1">
    <property type="nucleotide sequence ID" value="NC_007005.1"/>
</dbReference>
<dbReference type="RefSeq" id="YP_237636.1">
    <property type="nucleotide sequence ID" value="NC_007005.1"/>
</dbReference>
<dbReference type="SMR" id="Q4ZMM4"/>
<dbReference type="STRING" id="205918.Psyr_4568"/>
<dbReference type="GeneID" id="96221059"/>
<dbReference type="KEGG" id="psb:Psyr_4568"/>
<dbReference type="PATRIC" id="fig|205918.7.peg.4707"/>
<dbReference type="eggNOG" id="COG0316">
    <property type="taxonomic scope" value="Bacteria"/>
</dbReference>
<dbReference type="HOGENOM" id="CLU_069054_5_3_6"/>
<dbReference type="OrthoDB" id="9801228at2"/>
<dbReference type="Proteomes" id="UP000000426">
    <property type="component" value="Chromosome"/>
</dbReference>
<dbReference type="GO" id="GO:0005829">
    <property type="term" value="C:cytosol"/>
    <property type="evidence" value="ECO:0007669"/>
    <property type="project" value="TreeGrafter"/>
</dbReference>
<dbReference type="GO" id="GO:0051537">
    <property type="term" value="F:2 iron, 2 sulfur cluster binding"/>
    <property type="evidence" value="ECO:0007669"/>
    <property type="project" value="TreeGrafter"/>
</dbReference>
<dbReference type="GO" id="GO:0051539">
    <property type="term" value="F:4 iron, 4 sulfur cluster binding"/>
    <property type="evidence" value="ECO:0007669"/>
    <property type="project" value="TreeGrafter"/>
</dbReference>
<dbReference type="GO" id="GO:0005506">
    <property type="term" value="F:iron ion binding"/>
    <property type="evidence" value="ECO:0007669"/>
    <property type="project" value="UniProtKB-UniRule"/>
</dbReference>
<dbReference type="GO" id="GO:0016226">
    <property type="term" value="P:iron-sulfur cluster assembly"/>
    <property type="evidence" value="ECO:0007669"/>
    <property type="project" value="UniProtKB-UniRule"/>
</dbReference>
<dbReference type="FunFam" id="2.60.300.12:FF:000002">
    <property type="entry name" value="Iron-sulfur cluster insertion protein ErpA"/>
    <property type="match status" value="1"/>
</dbReference>
<dbReference type="Gene3D" id="2.60.300.12">
    <property type="entry name" value="HesB-like domain"/>
    <property type="match status" value="1"/>
</dbReference>
<dbReference type="HAMAP" id="MF_01380">
    <property type="entry name" value="Fe_S_insert_ErpA"/>
    <property type="match status" value="1"/>
</dbReference>
<dbReference type="InterPro" id="IPR000361">
    <property type="entry name" value="FeS_biogenesis"/>
</dbReference>
<dbReference type="InterPro" id="IPR016092">
    <property type="entry name" value="FeS_cluster_insertion"/>
</dbReference>
<dbReference type="InterPro" id="IPR017870">
    <property type="entry name" value="FeS_cluster_insertion_CS"/>
</dbReference>
<dbReference type="InterPro" id="IPR023063">
    <property type="entry name" value="FeS_cluster_insertion_RrpA"/>
</dbReference>
<dbReference type="InterPro" id="IPR035903">
    <property type="entry name" value="HesB-like_dom_sf"/>
</dbReference>
<dbReference type="NCBIfam" id="TIGR00049">
    <property type="entry name" value="iron-sulfur cluster assembly accessory protein"/>
    <property type="match status" value="1"/>
</dbReference>
<dbReference type="NCBIfam" id="NF010147">
    <property type="entry name" value="PRK13623.1"/>
    <property type="match status" value="1"/>
</dbReference>
<dbReference type="PANTHER" id="PTHR43011">
    <property type="entry name" value="IRON-SULFUR CLUSTER ASSEMBLY 2 HOMOLOG, MITOCHONDRIAL"/>
    <property type="match status" value="1"/>
</dbReference>
<dbReference type="PANTHER" id="PTHR43011:SF1">
    <property type="entry name" value="IRON-SULFUR CLUSTER ASSEMBLY 2 HOMOLOG, MITOCHONDRIAL"/>
    <property type="match status" value="1"/>
</dbReference>
<dbReference type="Pfam" id="PF01521">
    <property type="entry name" value="Fe-S_biosyn"/>
    <property type="match status" value="1"/>
</dbReference>
<dbReference type="SUPFAM" id="SSF89360">
    <property type="entry name" value="HesB-like domain"/>
    <property type="match status" value="1"/>
</dbReference>
<dbReference type="PROSITE" id="PS01152">
    <property type="entry name" value="HESB"/>
    <property type="match status" value="1"/>
</dbReference>
<keyword id="KW-0408">Iron</keyword>
<keyword id="KW-0411">Iron-sulfur</keyword>
<keyword id="KW-0479">Metal-binding</keyword>
<reference key="1">
    <citation type="journal article" date="2005" name="Proc. Natl. Acad. Sci. U.S.A.">
        <title>Comparison of the complete genome sequences of Pseudomonas syringae pv. syringae B728a and pv. tomato DC3000.</title>
        <authorList>
            <person name="Feil H."/>
            <person name="Feil W.S."/>
            <person name="Chain P."/>
            <person name="Larimer F."/>
            <person name="Dibartolo G."/>
            <person name="Copeland A."/>
            <person name="Lykidis A."/>
            <person name="Trong S."/>
            <person name="Nolan M."/>
            <person name="Goltsman E."/>
            <person name="Thiel J."/>
            <person name="Malfatti S."/>
            <person name="Loper J.E."/>
            <person name="Lapidus A."/>
            <person name="Detter J.C."/>
            <person name="Land M."/>
            <person name="Richardson P.M."/>
            <person name="Kyrpides N.C."/>
            <person name="Ivanova N."/>
            <person name="Lindow S.E."/>
        </authorList>
    </citation>
    <scope>NUCLEOTIDE SEQUENCE [LARGE SCALE GENOMIC DNA]</scope>
    <source>
        <strain>B728a</strain>
    </source>
</reference>
<feature type="chain" id="PRO_0000311531" description="Iron-sulfur cluster insertion protein ErpA">
    <location>
        <begin position="1"/>
        <end position="116"/>
    </location>
</feature>
<feature type="binding site" evidence="1">
    <location>
        <position position="44"/>
    </location>
    <ligand>
        <name>iron-sulfur cluster</name>
        <dbReference type="ChEBI" id="CHEBI:30408"/>
    </ligand>
</feature>
<feature type="binding site" evidence="1">
    <location>
        <position position="108"/>
    </location>
    <ligand>
        <name>iron-sulfur cluster</name>
        <dbReference type="ChEBI" id="CHEBI:30408"/>
    </ligand>
</feature>
<feature type="binding site" evidence="1">
    <location>
        <position position="110"/>
    </location>
    <ligand>
        <name>iron-sulfur cluster</name>
        <dbReference type="ChEBI" id="CHEBI:30408"/>
    </ligand>
</feature>
<name>ERPA_PSEU2</name>
<comment type="function">
    <text evidence="1">Required for insertion of 4Fe-4S clusters for at least IspG.</text>
</comment>
<comment type="cofactor">
    <cofactor evidence="1">
        <name>iron-sulfur cluster</name>
        <dbReference type="ChEBI" id="CHEBI:30408"/>
    </cofactor>
    <text evidence="1">Binds 1 iron-sulfur cluster per subunit.</text>
</comment>
<comment type="subunit">
    <text evidence="1">Homodimer.</text>
</comment>
<comment type="similarity">
    <text evidence="1">Belongs to the HesB/IscA family.</text>
</comment>
<organism>
    <name type="scientific">Pseudomonas syringae pv. syringae (strain B728a)</name>
    <dbReference type="NCBI Taxonomy" id="205918"/>
    <lineage>
        <taxon>Bacteria</taxon>
        <taxon>Pseudomonadati</taxon>
        <taxon>Pseudomonadota</taxon>
        <taxon>Gammaproteobacteria</taxon>
        <taxon>Pseudomonadales</taxon>
        <taxon>Pseudomonadaceae</taxon>
        <taxon>Pseudomonas</taxon>
        <taxon>Pseudomonas syringae</taxon>
    </lineage>
</organism>
<sequence>MSVESFTPTALEFTPNAAHKVKTLVDEEGNDRLKLRVFVTGGGCSGFQYGFTFDEDVADDDTIVEREGVSLVVDPMSFQYLAGAEVDYQEGLEGSRFVIKNPNASTTCGCGSSFSI</sequence>
<accession>Q4ZMM4</accession>
<protein>
    <recommendedName>
        <fullName evidence="1">Iron-sulfur cluster insertion protein ErpA</fullName>
    </recommendedName>
</protein>